<accession>Q2J845</accession>
<name>FMT_FRACC</name>
<gene>
    <name evidence="1" type="primary">fmt</name>
    <name type="ordered locus">Francci3_3190</name>
</gene>
<sequence>MRLVFAGTPAVALPSLRALIDSPRHDVVAVVTRPDRPSGRGRKVKPPPVHVLADEAGIPVLSPDRPRDPEFLATLAGLAPDCCPVVAYGALLPPAALAIPRHGWVNLHFSLLPAYRGAAPVQRTLLAGDDLTGASVFQIEPAMDSGPVYGVLTERVRPTDTSGDLLDRLAEAGAGLLVAVMDGIADGTVRPVAQPAEGISFAPKLTAEEARIDWTKPAIAVDRLARAATPAPGAWTTFRDRRLKIGPVRLGAVSGRPAGPVALPAGLPAGGLPAGQIMVLPGGDVAVGTGTSPVLLGEVRPEGRGPMAAAAWARGVRIAKGETLGAIGAMPVSGGTS</sequence>
<reference key="1">
    <citation type="journal article" date="2007" name="Genome Res.">
        <title>Genome characteristics of facultatively symbiotic Frankia sp. strains reflect host range and host plant biogeography.</title>
        <authorList>
            <person name="Normand P."/>
            <person name="Lapierre P."/>
            <person name="Tisa L.S."/>
            <person name="Gogarten J.P."/>
            <person name="Alloisio N."/>
            <person name="Bagnarol E."/>
            <person name="Bassi C.A."/>
            <person name="Berry A.M."/>
            <person name="Bickhart D.M."/>
            <person name="Choisne N."/>
            <person name="Couloux A."/>
            <person name="Cournoyer B."/>
            <person name="Cruveiller S."/>
            <person name="Daubin V."/>
            <person name="Demange N."/>
            <person name="Francino M.P."/>
            <person name="Goltsman E."/>
            <person name="Huang Y."/>
            <person name="Kopp O.R."/>
            <person name="Labarre L."/>
            <person name="Lapidus A."/>
            <person name="Lavire C."/>
            <person name="Marechal J."/>
            <person name="Martinez M."/>
            <person name="Mastronunzio J.E."/>
            <person name="Mullin B.C."/>
            <person name="Niemann J."/>
            <person name="Pujic P."/>
            <person name="Rawnsley T."/>
            <person name="Rouy Z."/>
            <person name="Schenowitz C."/>
            <person name="Sellstedt A."/>
            <person name="Tavares F."/>
            <person name="Tomkins J.P."/>
            <person name="Vallenet D."/>
            <person name="Valverde C."/>
            <person name="Wall L.G."/>
            <person name="Wang Y."/>
            <person name="Medigue C."/>
            <person name="Benson D.R."/>
        </authorList>
    </citation>
    <scope>NUCLEOTIDE SEQUENCE [LARGE SCALE GENOMIC DNA]</scope>
    <source>
        <strain>DSM 45818 / CECT 9043 / HFP020203 / CcI3</strain>
    </source>
</reference>
<comment type="function">
    <text evidence="1">Attaches a formyl group to the free amino group of methionyl-tRNA(fMet). The formyl group appears to play a dual role in the initiator identity of N-formylmethionyl-tRNA by promoting its recognition by IF2 and preventing the misappropriation of this tRNA by the elongation apparatus.</text>
</comment>
<comment type="catalytic activity">
    <reaction evidence="1">
        <text>L-methionyl-tRNA(fMet) + (6R)-10-formyltetrahydrofolate = N-formyl-L-methionyl-tRNA(fMet) + (6S)-5,6,7,8-tetrahydrofolate + H(+)</text>
        <dbReference type="Rhea" id="RHEA:24380"/>
        <dbReference type="Rhea" id="RHEA-COMP:9952"/>
        <dbReference type="Rhea" id="RHEA-COMP:9953"/>
        <dbReference type="ChEBI" id="CHEBI:15378"/>
        <dbReference type="ChEBI" id="CHEBI:57453"/>
        <dbReference type="ChEBI" id="CHEBI:78530"/>
        <dbReference type="ChEBI" id="CHEBI:78844"/>
        <dbReference type="ChEBI" id="CHEBI:195366"/>
        <dbReference type="EC" id="2.1.2.9"/>
    </reaction>
</comment>
<comment type="similarity">
    <text evidence="1">Belongs to the Fmt family.</text>
</comment>
<dbReference type="EC" id="2.1.2.9" evidence="1"/>
<dbReference type="EMBL" id="CP000249">
    <property type="protein sequence ID" value="ABD12547.1"/>
    <property type="molecule type" value="Genomic_DNA"/>
</dbReference>
<dbReference type="RefSeq" id="WP_011437575.1">
    <property type="nucleotide sequence ID" value="NZ_LRTJ01000064.1"/>
</dbReference>
<dbReference type="SMR" id="Q2J845"/>
<dbReference type="STRING" id="106370.Francci3_3190"/>
<dbReference type="KEGG" id="fra:Francci3_3190"/>
<dbReference type="eggNOG" id="COG0223">
    <property type="taxonomic scope" value="Bacteria"/>
</dbReference>
<dbReference type="HOGENOM" id="CLU_033347_1_0_11"/>
<dbReference type="OrthoDB" id="9802815at2"/>
<dbReference type="PhylomeDB" id="Q2J845"/>
<dbReference type="Proteomes" id="UP000001937">
    <property type="component" value="Chromosome"/>
</dbReference>
<dbReference type="GO" id="GO:0005829">
    <property type="term" value="C:cytosol"/>
    <property type="evidence" value="ECO:0007669"/>
    <property type="project" value="TreeGrafter"/>
</dbReference>
<dbReference type="GO" id="GO:0004479">
    <property type="term" value="F:methionyl-tRNA formyltransferase activity"/>
    <property type="evidence" value="ECO:0007669"/>
    <property type="project" value="UniProtKB-UniRule"/>
</dbReference>
<dbReference type="CDD" id="cd08646">
    <property type="entry name" value="FMT_core_Met-tRNA-FMT_N"/>
    <property type="match status" value="1"/>
</dbReference>
<dbReference type="CDD" id="cd08704">
    <property type="entry name" value="Met_tRNA_FMT_C"/>
    <property type="match status" value="1"/>
</dbReference>
<dbReference type="FunFam" id="3.40.50.12230:FF:000001">
    <property type="entry name" value="Methionyl-tRNA formyltransferase"/>
    <property type="match status" value="1"/>
</dbReference>
<dbReference type="Gene3D" id="3.40.50.12230">
    <property type="match status" value="1"/>
</dbReference>
<dbReference type="HAMAP" id="MF_00182">
    <property type="entry name" value="Formyl_trans"/>
    <property type="match status" value="1"/>
</dbReference>
<dbReference type="InterPro" id="IPR005794">
    <property type="entry name" value="Fmt"/>
</dbReference>
<dbReference type="InterPro" id="IPR005793">
    <property type="entry name" value="Formyl_trans_C"/>
</dbReference>
<dbReference type="InterPro" id="IPR002376">
    <property type="entry name" value="Formyl_transf_N"/>
</dbReference>
<dbReference type="InterPro" id="IPR036477">
    <property type="entry name" value="Formyl_transf_N_sf"/>
</dbReference>
<dbReference type="InterPro" id="IPR011034">
    <property type="entry name" value="Formyl_transferase-like_C_sf"/>
</dbReference>
<dbReference type="InterPro" id="IPR044135">
    <property type="entry name" value="Met-tRNA-FMT_C"/>
</dbReference>
<dbReference type="InterPro" id="IPR041711">
    <property type="entry name" value="Met-tRNA-FMT_N"/>
</dbReference>
<dbReference type="NCBIfam" id="TIGR00460">
    <property type="entry name" value="fmt"/>
    <property type="match status" value="1"/>
</dbReference>
<dbReference type="PANTHER" id="PTHR11138">
    <property type="entry name" value="METHIONYL-TRNA FORMYLTRANSFERASE"/>
    <property type="match status" value="1"/>
</dbReference>
<dbReference type="PANTHER" id="PTHR11138:SF5">
    <property type="entry name" value="METHIONYL-TRNA FORMYLTRANSFERASE, MITOCHONDRIAL"/>
    <property type="match status" value="1"/>
</dbReference>
<dbReference type="Pfam" id="PF02911">
    <property type="entry name" value="Formyl_trans_C"/>
    <property type="match status" value="1"/>
</dbReference>
<dbReference type="Pfam" id="PF00551">
    <property type="entry name" value="Formyl_trans_N"/>
    <property type="match status" value="1"/>
</dbReference>
<dbReference type="SUPFAM" id="SSF50486">
    <property type="entry name" value="FMT C-terminal domain-like"/>
    <property type="match status" value="1"/>
</dbReference>
<dbReference type="SUPFAM" id="SSF53328">
    <property type="entry name" value="Formyltransferase"/>
    <property type="match status" value="1"/>
</dbReference>
<evidence type="ECO:0000255" key="1">
    <source>
        <dbReference type="HAMAP-Rule" id="MF_00182"/>
    </source>
</evidence>
<protein>
    <recommendedName>
        <fullName evidence="1">Methionyl-tRNA formyltransferase</fullName>
        <ecNumber evidence="1">2.1.2.9</ecNumber>
    </recommendedName>
</protein>
<organism>
    <name type="scientific">Frankia casuarinae (strain DSM 45818 / CECT 9043 / HFP020203 / CcI3)</name>
    <dbReference type="NCBI Taxonomy" id="106370"/>
    <lineage>
        <taxon>Bacteria</taxon>
        <taxon>Bacillati</taxon>
        <taxon>Actinomycetota</taxon>
        <taxon>Actinomycetes</taxon>
        <taxon>Frankiales</taxon>
        <taxon>Frankiaceae</taxon>
        <taxon>Frankia</taxon>
    </lineage>
</organism>
<keyword id="KW-0648">Protein biosynthesis</keyword>
<keyword id="KW-1185">Reference proteome</keyword>
<keyword id="KW-0808">Transferase</keyword>
<proteinExistence type="inferred from homology"/>
<feature type="chain" id="PRO_1000020062" description="Methionyl-tRNA formyltransferase">
    <location>
        <begin position="1"/>
        <end position="337"/>
    </location>
</feature>
<feature type="binding site" evidence="1">
    <location>
        <begin position="110"/>
        <end position="113"/>
    </location>
    <ligand>
        <name>(6S)-5,6,7,8-tetrahydrofolate</name>
        <dbReference type="ChEBI" id="CHEBI:57453"/>
    </ligand>
</feature>